<organism>
    <name type="scientific">Saimiri sciureus</name>
    <name type="common">Common squirrel monkey</name>
    <dbReference type="NCBI Taxonomy" id="9521"/>
    <lineage>
        <taxon>Eukaryota</taxon>
        <taxon>Metazoa</taxon>
        <taxon>Chordata</taxon>
        <taxon>Craniata</taxon>
        <taxon>Vertebrata</taxon>
        <taxon>Euteleostomi</taxon>
        <taxon>Mammalia</taxon>
        <taxon>Eutheria</taxon>
        <taxon>Euarchontoglires</taxon>
        <taxon>Primates</taxon>
        <taxon>Haplorrhini</taxon>
        <taxon>Platyrrhini</taxon>
        <taxon>Cebidae</taxon>
        <taxon>Saimiriinae</taxon>
        <taxon>Saimiri</taxon>
    </lineage>
</organism>
<proteinExistence type="evidence at transcript level"/>
<dbReference type="EMBL" id="L25354">
    <property type="protein sequence ID" value="AAA36948.1"/>
    <property type="molecule type" value="Genomic_DNA"/>
</dbReference>
<dbReference type="EMBL" id="U18618">
    <property type="protein sequence ID" value="AAB40984.1"/>
    <property type="molecule type" value="Genomic_DNA"/>
</dbReference>
<dbReference type="SMR" id="P68028"/>
<dbReference type="GO" id="GO:0072562">
    <property type="term" value="C:blood microparticle"/>
    <property type="evidence" value="ECO:0007669"/>
    <property type="project" value="TreeGrafter"/>
</dbReference>
<dbReference type="GO" id="GO:0031838">
    <property type="term" value="C:haptoglobin-hemoglobin complex"/>
    <property type="evidence" value="ECO:0007669"/>
    <property type="project" value="TreeGrafter"/>
</dbReference>
<dbReference type="GO" id="GO:0005833">
    <property type="term" value="C:hemoglobin complex"/>
    <property type="evidence" value="ECO:0007669"/>
    <property type="project" value="InterPro"/>
</dbReference>
<dbReference type="GO" id="GO:0031720">
    <property type="term" value="F:haptoglobin binding"/>
    <property type="evidence" value="ECO:0007669"/>
    <property type="project" value="TreeGrafter"/>
</dbReference>
<dbReference type="GO" id="GO:0020037">
    <property type="term" value="F:heme binding"/>
    <property type="evidence" value="ECO:0007669"/>
    <property type="project" value="InterPro"/>
</dbReference>
<dbReference type="GO" id="GO:0031721">
    <property type="term" value="F:hemoglobin alpha binding"/>
    <property type="evidence" value="ECO:0007669"/>
    <property type="project" value="TreeGrafter"/>
</dbReference>
<dbReference type="GO" id="GO:0046872">
    <property type="term" value="F:metal ion binding"/>
    <property type="evidence" value="ECO:0007669"/>
    <property type="project" value="UniProtKB-KW"/>
</dbReference>
<dbReference type="GO" id="GO:0043177">
    <property type="term" value="F:organic acid binding"/>
    <property type="evidence" value="ECO:0007669"/>
    <property type="project" value="TreeGrafter"/>
</dbReference>
<dbReference type="GO" id="GO:0019825">
    <property type="term" value="F:oxygen binding"/>
    <property type="evidence" value="ECO:0007669"/>
    <property type="project" value="InterPro"/>
</dbReference>
<dbReference type="GO" id="GO:0005344">
    <property type="term" value="F:oxygen carrier activity"/>
    <property type="evidence" value="ECO:0007669"/>
    <property type="project" value="UniProtKB-KW"/>
</dbReference>
<dbReference type="GO" id="GO:0004601">
    <property type="term" value="F:peroxidase activity"/>
    <property type="evidence" value="ECO:0007669"/>
    <property type="project" value="TreeGrafter"/>
</dbReference>
<dbReference type="GO" id="GO:0042744">
    <property type="term" value="P:hydrogen peroxide catabolic process"/>
    <property type="evidence" value="ECO:0007669"/>
    <property type="project" value="TreeGrafter"/>
</dbReference>
<dbReference type="CDD" id="cd08925">
    <property type="entry name" value="Hb-beta-like"/>
    <property type="match status" value="1"/>
</dbReference>
<dbReference type="FunFam" id="1.10.490.10:FF:000001">
    <property type="entry name" value="Hemoglobin subunit beta"/>
    <property type="match status" value="1"/>
</dbReference>
<dbReference type="Gene3D" id="1.10.490.10">
    <property type="entry name" value="Globins"/>
    <property type="match status" value="1"/>
</dbReference>
<dbReference type="InterPro" id="IPR000971">
    <property type="entry name" value="Globin"/>
</dbReference>
<dbReference type="InterPro" id="IPR009050">
    <property type="entry name" value="Globin-like_sf"/>
</dbReference>
<dbReference type="InterPro" id="IPR012292">
    <property type="entry name" value="Globin/Proto"/>
</dbReference>
<dbReference type="InterPro" id="IPR002337">
    <property type="entry name" value="Hemoglobin_b"/>
</dbReference>
<dbReference type="InterPro" id="IPR050056">
    <property type="entry name" value="Hemoglobin_oxygen_transport"/>
</dbReference>
<dbReference type="PANTHER" id="PTHR11442">
    <property type="entry name" value="HEMOGLOBIN FAMILY MEMBER"/>
    <property type="match status" value="1"/>
</dbReference>
<dbReference type="PANTHER" id="PTHR11442:SF7">
    <property type="entry name" value="HEMOGLOBIN SUBUNIT EPSILON"/>
    <property type="match status" value="1"/>
</dbReference>
<dbReference type="Pfam" id="PF00042">
    <property type="entry name" value="Globin"/>
    <property type="match status" value="1"/>
</dbReference>
<dbReference type="PRINTS" id="PR00814">
    <property type="entry name" value="BETAHAEM"/>
</dbReference>
<dbReference type="SUPFAM" id="SSF46458">
    <property type="entry name" value="Globin-like"/>
    <property type="match status" value="1"/>
</dbReference>
<dbReference type="PROSITE" id="PS01033">
    <property type="entry name" value="GLOBIN"/>
    <property type="match status" value="1"/>
</dbReference>
<keyword id="KW-0349">Heme</keyword>
<keyword id="KW-0408">Iron</keyword>
<keyword id="KW-0479">Metal-binding</keyword>
<keyword id="KW-0561">Oxygen transport</keyword>
<keyword id="KW-0597">Phosphoprotein</keyword>
<keyword id="KW-0813">Transport</keyword>
<gene>
    <name type="primary">HBE1</name>
</gene>
<evidence type="ECO:0000250" key="1">
    <source>
        <dbReference type="UniProtKB" id="P02100"/>
    </source>
</evidence>
<evidence type="ECO:0000255" key="2">
    <source>
        <dbReference type="PROSITE-ProRule" id="PRU00238"/>
    </source>
</evidence>
<evidence type="ECO:0000305" key="3"/>
<accession>P68028</accession>
<accession>P51444</accession>
<accession>Q29409</accession>
<comment type="function">
    <text>The epsilon chain is a beta-type chain of early mammalian embryonic hemoglobin.</text>
</comment>
<comment type="subunit">
    <text>Heterotetramer of two alpha chains and two epsilon chains in early embryonic hemoglobin Gower-2; two zeta chains and two epsilon chains in early embryonic hemoglobin Gower-1.</text>
</comment>
<comment type="tissue specificity">
    <text>Red blood cells.</text>
</comment>
<comment type="similarity">
    <text evidence="2">Belongs to the globin family.</text>
</comment>
<sequence>MVHFTAEEKAAITSLWSKMNVEEAGGEALGRLLVVYPWTQRFFDNFGNLSSPSAILGNPKVKAHGKKVLTSFGDAIKNMDNLKTTFAKLSELHCDKLHVDPENFRLLGNVMVIILATHFGKEFTPEVQAAWQKLVSAVAIALGHKYH</sequence>
<reference key="1">
    <citation type="journal article" date="1993" name="Mol. Phylogenet. Evol.">
        <title>Molecular phylogeny of the New World monkeys (Platyrrhini, primates).</title>
        <authorList>
            <person name="Schneider H."/>
            <person name="Schneider M.P.C."/>
            <person name="Sampaio I."/>
            <person name="Harada M.L."/>
            <person name="Stanhope M.J."/>
            <person name="Czekysbuaj J."/>
            <person name="Goodman M."/>
        </authorList>
    </citation>
    <scope>NUCLEOTIDE SEQUENCE [GENOMIC DNA]</scope>
    <source>
        <tissue>Lymphocyte</tissue>
    </source>
</reference>
<reference key="2">
    <citation type="journal article" date="1995" name="Mol. Phylogenet. Evol.">
        <title>DNA evidence on the phylogenetic systematics of New World monkeys: support for the sister-grouping of Cebus and Saimiri from two unlinked nuclear genes.</title>
        <authorList>
            <person name="Harada M.L."/>
            <person name="Schneider H."/>
            <person name="Schneider M.P.C."/>
            <person name="Sampaio I."/>
            <person name="Czelusniak J."/>
            <person name="Goodman M."/>
        </authorList>
    </citation>
    <scope>NUCLEOTIDE SEQUENCE [GENOMIC DNA]</scope>
    <source>
        <tissue>Lymphocyte</tissue>
    </source>
</reference>
<protein>
    <recommendedName>
        <fullName>Hemoglobin subunit epsilon</fullName>
    </recommendedName>
    <alternativeName>
        <fullName>Epsilon-globin</fullName>
    </alternativeName>
    <alternativeName>
        <fullName>Hemoglobin epsilon chain</fullName>
    </alternativeName>
</protein>
<name>HBE_SAISC</name>
<feature type="chain" id="PRO_0000053229" description="Hemoglobin subunit epsilon">
    <location>
        <begin position="1"/>
        <end position="147"/>
    </location>
</feature>
<feature type="domain" description="Globin" evidence="2">
    <location>
        <begin position="3"/>
        <end position="147"/>
    </location>
</feature>
<feature type="binding site" description="distal binding residue" evidence="2">
    <location>
        <position position="64"/>
    </location>
    <ligand>
        <name>heme b</name>
        <dbReference type="ChEBI" id="CHEBI:60344"/>
    </ligand>
    <ligandPart>
        <name>Fe</name>
        <dbReference type="ChEBI" id="CHEBI:18248"/>
    </ligandPart>
</feature>
<feature type="binding site" description="proximal binding residue" evidence="2">
    <location>
        <position position="93"/>
    </location>
    <ligand>
        <name>heme b</name>
        <dbReference type="ChEBI" id="CHEBI:60344"/>
    </ligand>
    <ligandPart>
        <name>Fe</name>
        <dbReference type="ChEBI" id="CHEBI:18248"/>
    </ligandPart>
</feature>
<feature type="modified residue" description="Phosphoserine" evidence="1">
    <location>
        <position position="14"/>
    </location>
</feature>
<feature type="modified residue" description="Phosphoserine" evidence="1">
    <location>
        <position position="51"/>
    </location>
</feature>
<feature type="sequence conflict" description="In Ref. 1; AAA36948." evidence="3" ref="1">
    <original>N</original>
    <variation>H</variation>
    <location>
        <position position="81"/>
    </location>
</feature>